<accession>Q3ACG0</accession>
<sequence>MKLLIMGPPGAGKGTQAEKIVKEFGITHISTGDMFRAALKNQTPLGLKAKEYMDKGELVPDEIVIAMVEERISAPDCAKGFLLDGFPRTIPQAEALDKKLAEMGITLDGVINIEVPREELIERLTGRRVCRQCGATYHVKFNPPKVEGVCDACGGELYQRSDDSLETVSNRLDVYEAQTAPLKDYYAKTGLLKNIDGTKSIEEVFASIKNALQK</sequence>
<feature type="chain" id="PRO_1000021713" description="Adenylate kinase">
    <location>
        <begin position="1"/>
        <end position="214"/>
    </location>
</feature>
<feature type="region of interest" description="NMP" evidence="1">
    <location>
        <begin position="30"/>
        <end position="59"/>
    </location>
</feature>
<feature type="region of interest" description="LID" evidence="1">
    <location>
        <begin position="126"/>
        <end position="163"/>
    </location>
</feature>
<feature type="binding site" evidence="1">
    <location>
        <begin position="10"/>
        <end position="15"/>
    </location>
    <ligand>
        <name>ATP</name>
        <dbReference type="ChEBI" id="CHEBI:30616"/>
    </ligand>
</feature>
<feature type="binding site" evidence="1">
    <location>
        <position position="31"/>
    </location>
    <ligand>
        <name>AMP</name>
        <dbReference type="ChEBI" id="CHEBI:456215"/>
    </ligand>
</feature>
<feature type="binding site" evidence="1">
    <location>
        <position position="36"/>
    </location>
    <ligand>
        <name>AMP</name>
        <dbReference type="ChEBI" id="CHEBI:456215"/>
    </ligand>
</feature>
<feature type="binding site" evidence="1">
    <location>
        <begin position="57"/>
        <end position="59"/>
    </location>
    <ligand>
        <name>AMP</name>
        <dbReference type="ChEBI" id="CHEBI:456215"/>
    </ligand>
</feature>
<feature type="binding site" evidence="1">
    <location>
        <begin position="85"/>
        <end position="88"/>
    </location>
    <ligand>
        <name>AMP</name>
        <dbReference type="ChEBI" id="CHEBI:456215"/>
    </ligand>
</feature>
<feature type="binding site" evidence="1">
    <location>
        <position position="92"/>
    </location>
    <ligand>
        <name>AMP</name>
        <dbReference type="ChEBI" id="CHEBI:456215"/>
    </ligand>
</feature>
<feature type="binding site" evidence="1">
    <location>
        <position position="127"/>
    </location>
    <ligand>
        <name>ATP</name>
        <dbReference type="ChEBI" id="CHEBI:30616"/>
    </ligand>
</feature>
<feature type="binding site" evidence="1">
    <location>
        <position position="130"/>
    </location>
    <ligand>
        <name>Zn(2+)</name>
        <dbReference type="ChEBI" id="CHEBI:29105"/>
        <note>structural</note>
    </ligand>
</feature>
<feature type="binding site" evidence="1">
    <location>
        <position position="133"/>
    </location>
    <ligand>
        <name>Zn(2+)</name>
        <dbReference type="ChEBI" id="CHEBI:29105"/>
        <note>structural</note>
    </ligand>
</feature>
<feature type="binding site" evidence="1">
    <location>
        <begin position="136"/>
        <end position="137"/>
    </location>
    <ligand>
        <name>ATP</name>
        <dbReference type="ChEBI" id="CHEBI:30616"/>
    </ligand>
</feature>
<feature type="binding site" evidence="1">
    <location>
        <position position="150"/>
    </location>
    <ligand>
        <name>Zn(2+)</name>
        <dbReference type="ChEBI" id="CHEBI:29105"/>
        <note>structural</note>
    </ligand>
</feature>
<feature type="binding site" evidence="1">
    <location>
        <position position="153"/>
    </location>
    <ligand>
        <name>Zn(2+)</name>
        <dbReference type="ChEBI" id="CHEBI:29105"/>
        <note>structural</note>
    </ligand>
</feature>
<feature type="binding site" evidence="1">
    <location>
        <position position="160"/>
    </location>
    <ligand>
        <name>AMP</name>
        <dbReference type="ChEBI" id="CHEBI:456215"/>
    </ligand>
</feature>
<feature type="binding site" evidence="1">
    <location>
        <position position="171"/>
    </location>
    <ligand>
        <name>AMP</name>
        <dbReference type="ChEBI" id="CHEBI:456215"/>
    </ligand>
</feature>
<feature type="binding site" evidence="1">
    <location>
        <position position="199"/>
    </location>
    <ligand>
        <name>ATP</name>
        <dbReference type="ChEBI" id="CHEBI:30616"/>
    </ligand>
</feature>
<comment type="function">
    <text evidence="1">Catalyzes the reversible transfer of the terminal phosphate group between ATP and AMP. Plays an important role in cellular energy homeostasis and in adenine nucleotide metabolism.</text>
</comment>
<comment type="catalytic activity">
    <reaction evidence="1">
        <text>AMP + ATP = 2 ADP</text>
        <dbReference type="Rhea" id="RHEA:12973"/>
        <dbReference type="ChEBI" id="CHEBI:30616"/>
        <dbReference type="ChEBI" id="CHEBI:456215"/>
        <dbReference type="ChEBI" id="CHEBI:456216"/>
        <dbReference type="EC" id="2.7.4.3"/>
    </reaction>
</comment>
<comment type="pathway">
    <text evidence="1">Purine metabolism; AMP biosynthesis via salvage pathway; AMP from ADP: step 1/1.</text>
</comment>
<comment type="subunit">
    <text evidence="1">Monomer.</text>
</comment>
<comment type="subcellular location">
    <subcellularLocation>
        <location evidence="1">Cytoplasm</location>
    </subcellularLocation>
</comment>
<comment type="domain">
    <text evidence="1">Consists of three domains, a large central CORE domain and two small peripheral domains, NMPbind and LID, which undergo movements during catalysis. The LID domain closes over the site of phosphoryl transfer upon ATP binding. Assembling and dissambling the active center during each catalytic cycle provides an effective means to prevent ATP hydrolysis. Some bacteria have evolved a zinc-coordinating structure that stabilizes the LID domain.</text>
</comment>
<comment type="similarity">
    <text evidence="1">Belongs to the adenylate kinase family.</text>
</comment>
<evidence type="ECO:0000255" key="1">
    <source>
        <dbReference type="HAMAP-Rule" id="MF_00235"/>
    </source>
</evidence>
<keyword id="KW-0067">ATP-binding</keyword>
<keyword id="KW-0963">Cytoplasm</keyword>
<keyword id="KW-0418">Kinase</keyword>
<keyword id="KW-0479">Metal-binding</keyword>
<keyword id="KW-0545">Nucleotide biosynthesis</keyword>
<keyword id="KW-0547">Nucleotide-binding</keyword>
<keyword id="KW-1185">Reference proteome</keyword>
<keyword id="KW-0808">Transferase</keyword>
<keyword id="KW-0862">Zinc</keyword>
<reference key="1">
    <citation type="journal article" date="2005" name="PLoS Genet.">
        <title>Life in hot carbon monoxide: the complete genome sequence of Carboxydothermus hydrogenoformans Z-2901.</title>
        <authorList>
            <person name="Wu M."/>
            <person name="Ren Q."/>
            <person name="Durkin A.S."/>
            <person name="Daugherty S.C."/>
            <person name="Brinkac L.M."/>
            <person name="Dodson R.J."/>
            <person name="Madupu R."/>
            <person name="Sullivan S.A."/>
            <person name="Kolonay J.F."/>
            <person name="Nelson W.C."/>
            <person name="Tallon L.J."/>
            <person name="Jones K.M."/>
            <person name="Ulrich L.E."/>
            <person name="Gonzalez J.M."/>
            <person name="Zhulin I.B."/>
            <person name="Robb F.T."/>
            <person name="Eisen J.A."/>
        </authorList>
    </citation>
    <scope>NUCLEOTIDE SEQUENCE [LARGE SCALE GENOMIC DNA]</scope>
    <source>
        <strain>ATCC BAA-161 / DSM 6008 / Z-2901</strain>
    </source>
</reference>
<protein>
    <recommendedName>
        <fullName evidence="1">Adenylate kinase</fullName>
        <shortName evidence="1">AK</shortName>
        <ecNumber evidence="1">2.7.4.3</ecNumber>
    </recommendedName>
    <alternativeName>
        <fullName evidence="1">ATP-AMP transphosphorylase</fullName>
    </alternativeName>
    <alternativeName>
        <fullName evidence="1">ATP:AMP phosphotransferase</fullName>
    </alternativeName>
    <alternativeName>
        <fullName evidence="1">Adenylate monophosphate kinase</fullName>
    </alternativeName>
</protein>
<proteinExistence type="inferred from homology"/>
<organism>
    <name type="scientific">Carboxydothermus hydrogenoformans (strain ATCC BAA-161 / DSM 6008 / Z-2901)</name>
    <dbReference type="NCBI Taxonomy" id="246194"/>
    <lineage>
        <taxon>Bacteria</taxon>
        <taxon>Bacillati</taxon>
        <taxon>Bacillota</taxon>
        <taxon>Clostridia</taxon>
        <taxon>Thermoanaerobacterales</taxon>
        <taxon>Thermoanaerobacteraceae</taxon>
        <taxon>Carboxydothermus</taxon>
    </lineage>
</organism>
<gene>
    <name evidence="1" type="primary">adk</name>
    <name type="ordered locus">CHY_1340</name>
</gene>
<dbReference type="EC" id="2.7.4.3" evidence="1"/>
<dbReference type="EMBL" id="CP000141">
    <property type="protein sequence ID" value="ABB16065.1"/>
    <property type="molecule type" value="Genomic_DNA"/>
</dbReference>
<dbReference type="RefSeq" id="WP_011344250.1">
    <property type="nucleotide sequence ID" value="NC_007503.1"/>
</dbReference>
<dbReference type="SMR" id="Q3ACG0"/>
<dbReference type="FunCoup" id="Q3ACG0">
    <property type="interactions" value="461"/>
</dbReference>
<dbReference type="STRING" id="246194.CHY_1340"/>
<dbReference type="KEGG" id="chy:CHY_1340"/>
<dbReference type="eggNOG" id="COG0563">
    <property type="taxonomic scope" value="Bacteria"/>
</dbReference>
<dbReference type="HOGENOM" id="CLU_032354_1_2_9"/>
<dbReference type="InParanoid" id="Q3ACG0"/>
<dbReference type="OrthoDB" id="9805030at2"/>
<dbReference type="UniPathway" id="UPA00588">
    <property type="reaction ID" value="UER00649"/>
</dbReference>
<dbReference type="Proteomes" id="UP000002706">
    <property type="component" value="Chromosome"/>
</dbReference>
<dbReference type="GO" id="GO:0005737">
    <property type="term" value="C:cytoplasm"/>
    <property type="evidence" value="ECO:0007669"/>
    <property type="project" value="UniProtKB-SubCell"/>
</dbReference>
<dbReference type="GO" id="GO:0004017">
    <property type="term" value="F:adenylate kinase activity"/>
    <property type="evidence" value="ECO:0007669"/>
    <property type="project" value="UniProtKB-UniRule"/>
</dbReference>
<dbReference type="GO" id="GO:0005524">
    <property type="term" value="F:ATP binding"/>
    <property type="evidence" value="ECO:0007669"/>
    <property type="project" value="UniProtKB-UniRule"/>
</dbReference>
<dbReference type="GO" id="GO:0008270">
    <property type="term" value="F:zinc ion binding"/>
    <property type="evidence" value="ECO:0007669"/>
    <property type="project" value="UniProtKB-UniRule"/>
</dbReference>
<dbReference type="GO" id="GO:0044209">
    <property type="term" value="P:AMP salvage"/>
    <property type="evidence" value="ECO:0007669"/>
    <property type="project" value="UniProtKB-UniRule"/>
</dbReference>
<dbReference type="CDD" id="cd01428">
    <property type="entry name" value="ADK"/>
    <property type="match status" value="1"/>
</dbReference>
<dbReference type="FunFam" id="3.40.50.300:FF:000106">
    <property type="entry name" value="Adenylate kinase mitochondrial"/>
    <property type="match status" value="1"/>
</dbReference>
<dbReference type="Gene3D" id="3.40.50.300">
    <property type="entry name" value="P-loop containing nucleotide triphosphate hydrolases"/>
    <property type="match status" value="1"/>
</dbReference>
<dbReference type="HAMAP" id="MF_00235">
    <property type="entry name" value="Adenylate_kinase_Adk"/>
    <property type="match status" value="1"/>
</dbReference>
<dbReference type="InterPro" id="IPR006259">
    <property type="entry name" value="Adenyl_kin_sub"/>
</dbReference>
<dbReference type="InterPro" id="IPR000850">
    <property type="entry name" value="Adenylat/UMP-CMP_kin"/>
</dbReference>
<dbReference type="InterPro" id="IPR033690">
    <property type="entry name" value="Adenylat_kinase_CS"/>
</dbReference>
<dbReference type="InterPro" id="IPR007862">
    <property type="entry name" value="Adenylate_kinase_lid-dom"/>
</dbReference>
<dbReference type="InterPro" id="IPR027417">
    <property type="entry name" value="P-loop_NTPase"/>
</dbReference>
<dbReference type="NCBIfam" id="TIGR01351">
    <property type="entry name" value="adk"/>
    <property type="match status" value="1"/>
</dbReference>
<dbReference type="NCBIfam" id="NF001379">
    <property type="entry name" value="PRK00279.1-1"/>
    <property type="match status" value="1"/>
</dbReference>
<dbReference type="NCBIfam" id="NF001380">
    <property type="entry name" value="PRK00279.1-2"/>
    <property type="match status" value="1"/>
</dbReference>
<dbReference type="NCBIfam" id="NF001381">
    <property type="entry name" value="PRK00279.1-3"/>
    <property type="match status" value="1"/>
</dbReference>
<dbReference type="NCBIfam" id="NF011100">
    <property type="entry name" value="PRK14527.1"/>
    <property type="match status" value="1"/>
</dbReference>
<dbReference type="PANTHER" id="PTHR23359">
    <property type="entry name" value="NUCLEOTIDE KINASE"/>
    <property type="match status" value="1"/>
</dbReference>
<dbReference type="Pfam" id="PF00406">
    <property type="entry name" value="ADK"/>
    <property type="match status" value="1"/>
</dbReference>
<dbReference type="Pfam" id="PF05191">
    <property type="entry name" value="ADK_lid"/>
    <property type="match status" value="1"/>
</dbReference>
<dbReference type="PRINTS" id="PR00094">
    <property type="entry name" value="ADENYLTKNASE"/>
</dbReference>
<dbReference type="SUPFAM" id="SSF52540">
    <property type="entry name" value="P-loop containing nucleoside triphosphate hydrolases"/>
    <property type="match status" value="1"/>
</dbReference>
<dbReference type="PROSITE" id="PS00113">
    <property type="entry name" value="ADENYLATE_KINASE"/>
    <property type="match status" value="1"/>
</dbReference>
<name>KAD_CARHZ</name>